<evidence type="ECO:0000255" key="1">
    <source>
        <dbReference type="HAMAP-Rule" id="MF_00555"/>
    </source>
</evidence>
<feature type="chain" id="PRO_1000129118" description="Aspartate--ammonia ligase">
    <location>
        <begin position="1"/>
        <end position="330"/>
    </location>
</feature>
<organism>
    <name type="scientific">Escherichia coli (strain SMS-3-5 / SECEC)</name>
    <dbReference type="NCBI Taxonomy" id="439855"/>
    <lineage>
        <taxon>Bacteria</taxon>
        <taxon>Pseudomonadati</taxon>
        <taxon>Pseudomonadota</taxon>
        <taxon>Gammaproteobacteria</taxon>
        <taxon>Enterobacterales</taxon>
        <taxon>Enterobacteriaceae</taxon>
        <taxon>Escherichia</taxon>
    </lineage>
</organism>
<gene>
    <name evidence="1" type="primary">asnA</name>
    <name type="ordered locus">EcSMS35_4112</name>
</gene>
<comment type="catalytic activity">
    <reaction evidence="1">
        <text>L-aspartate + NH4(+) + ATP = L-asparagine + AMP + diphosphate + H(+)</text>
        <dbReference type="Rhea" id="RHEA:11372"/>
        <dbReference type="ChEBI" id="CHEBI:15378"/>
        <dbReference type="ChEBI" id="CHEBI:28938"/>
        <dbReference type="ChEBI" id="CHEBI:29991"/>
        <dbReference type="ChEBI" id="CHEBI:30616"/>
        <dbReference type="ChEBI" id="CHEBI:33019"/>
        <dbReference type="ChEBI" id="CHEBI:58048"/>
        <dbReference type="ChEBI" id="CHEBI:456215"/>
        <dbReference type="EC" id="6.3.1.1"/>
    </reaction>
</comment>
<comment type="pathway">
    <text evidence="1">Amino-acid biosynthesis; L-asparagine biosynthesis; L-asparagine from L-aspartate (ammonia route): step 1/1.</text>
</comment>
<comment type="subcellular location">
    <subcellularLocation>
        <location evidence="1">Cytoplasm</location>
    </subcellularLocation>
</comment>
<comment type="similarity">
    <text evidence="1">Belongs to the class-II aminoacyl-tRNA synthetase family. AsnA subfamily.</text>
</comment>
<accession>B1LL71</accession>
<proteinExistence type="inferred from homology"/>
<keyword id="KW-0028">Amino-acid biosynthesis</keyword>
<keyword id="KW-0061">Asparagine biosynthesis</keyword>
<keyword id="KW-0067">ATP-binding</keyword>
<keyword id="KW-0963">Cytoplasm</keyword>
<keyword id="KW-0436">Ligase</keyword>
<keyword id="KW-0547">Nucleotide-binding</keyword>
<name>ASNA_ECOSM</name>
<protein>
    <recommendedName>
        <fullName evidence="1">Aspartate--ammonia ligase</fullName>
        <ecNumber evidence="1">6.3.1.1</ecNumber>
    </recommendedName>
    <alternativeName>
        <fullName evidence="1">Asparagine synthetase A</fullName>
    </alternativeName>
</protein>
<dbReference type="EC" id="6.3.1.1" evidence="1"/>
<dbReference type="EMBL" id="CP000970">
    <property type="protein sequence ID" value="ACB19526.1"/>
    <property type="molecule type" value="Genomic_DNA"/>
</dbReference>
<dbReference type="RefSeq" id="WP_000845091.1">
    <property type="nucleotide sequence ID" value="NC_010498.1"/>
</dbReference>
<dbReference type="SMR" id="B1LL71"/>
<dbReference type="KEGG" id="ecm:EcSMS35_4112"/>
<dbReference type="HOGENOM" id="CLU_071543_0_0_6"/>
<dbReference type="UniPathway" id="UPA00134">
    <property type="reaction ID" value="UER00194"/>
</dbReference>
<dbReference type="Proteomes" id="UP000007011">
    <property type="component" value="Chromosome"/>
</dbReference>
<dbReference type="GO" id="GO:0005829">
    <property type="term" value="C:cytosol"/>
    <property type="evidence" value="ECO:0007669"/>
    <property type="project" value="TreeGrafter"/>
</dbReference>
<dbReference type="GO" id="GO:0004071">
    <property type="term" value="F:aspartate-ammonia ligase activity"/>
    <property type="evidence" value="ECO:0007669"/>
    <property type="project" value="UniProtKB-UniRule"/>
</dbReference>
<dbReference type="GO" id="GO:0005524">
    <property type="term" value="F:ATP binding"/>
    <property type="evidence" value="ECO:0007669"/>
    <property type="project" value="UniProtKB-UniRule"/>
</dbReference>
<dbReference type="GO" id="GO:0070981">
    <property type="term" value="P:L-asparagine biosynthetic process"/>
    <property type="evidence" value="ECO:0007669"/>
    <property type="project" value="UniProtKB-UniRule"/>
</dbReference>
<dbReference type="CDD" id="cd00645">
    <property type="entry name" value="AsnA"/>
    <property type="match status" value="1"/>
</dbReference>
<dbReference type="FunFam" id="3.30.930.10:FF:000025">
    <property type="entry name" value="Aspartate--ammonia ligase"/>
    <property type="match status" value="1"/>
</dbReference>
<dbReference type="Gene3D" id="3.30.930.10">
    <property type="entry name" value="Bira Bifunctional Protein, Domain 2"/>
    <property type="match status" value="1"/>
</dbReference>
<dbReference type="HAMAP" id="MF_00555">
    <property type="entry name" value="AsnA"/>
    <property type="match status" value="1"/>
</dbReference>
<dbReference type="InterPro" id="IPR006195">
    <property type="entry name" value="aa-tRNA-synth_II"/>
</dbReference>
<dbReference type="InterPro" id="IPR045864">
    <property type="entry name" value="aa-tRNA-synth_II/BPL/LPL"/>
</dbReference>
<dbReference type="InterPro" id="IPR004618">
    <property type="entry name" value="AsnA"/>
</dbReference>
<dbReference type="NCBIfam" id="TIGR00669">
    <property type="entry name" value="asnA"/>
    <property type="match status" value="1"/>
</dbReference>
<dbReference type="PANTHER" id="PTHR30073">
    <property type="entry name" value="ASPARTATE--AMMONIA LIGASE"/>
    <property type="match status" value="1"/>
</dbReference>
<dbReference type="PANTHER" id="PTHR30073:SF5">
    <property type="entry name" value="ASPARTATE--AMMONIA LIGASE"/>
    <property type="match status" value="1"/>
</dbReference>
<dbReference type="Pfam" id="PF03590">
    <property type="entry name" value="AsnA"/>
    <property type="match status" value="1"/>
</dbReference>
<dbReference type="PIRSF" id="PIRSF001555">
    <property type="entry name" value="Asp_ammon_ligase"/>
    <property type="match status" value="1"/>
</dbReference>
<dbReference type="SUPFAM" id="SSF55681">
    <property type="entry name" value="Class II aaRS and biotin synthetases"/>
    <property type="match status" value="1"/>
</dbReference>
<dbReference type="PROSITE" id="PS50862">
    <property type="entry name" value="AA_TRNA_LIGASE_II"/>
    <property type="match status" value="1"/>
</dbReference>
<sequence>MKTAYIAKQRQISFVKSHFSRQLEERLGLIEVQAPILSRVGDGTQDNLSGCEKAVQVKVKALPDAQFEVVHSLAKWKRQTLGQHDFSAGEGLYTHMKALRPDEDRLSPLHSVYVDQWDWERVMADGERQFSTLKSTVEAIWAGIKATEAAVSEEFGLAPFLPDQIHFVHSQELLSRYPNLDAKGRERAIAKDLGAVFLVGIGGKLSDGHRHDVRAPDYDDWSTPSELGYAGLNGDILVWNPVLEDAFELSSMGIRVDADTLKHQLALTGDEDRLQLEWHQALLRGEMPQTIGGGIGQSRLTMLLLQLPHIGQVQCGVWSAAVRESVPSLL</sequence>
<reference key="1">
    <citation type="journal article" date="2008" name="J. Bacteriol.">
        <title>Insights into the environmental resistance gene pool from the genome sequence of the multidrug-resistant environmental isolate Escherichia coli SMS-3-5.</title>
        <authorList>
            <person name="Fricke W.F."/>
            <person name="Wright M.S."/>
            <person name="Lindell A.H."/>
            <person name="Harkins D.M."/>
            <person name="Baker-Austin C."/>
            <person name="Ravel J."/>
            <person name="Stepanauskas R."/>
        </authorList>
    </citation>
    <scope>NUCLEOTIDE SEQUENCE [LARGE SCALE GENOMIC DNA]</scope>
    <source>
        <strain>SMS-3-5 / SECEC</strain>
    </source>
</reference>